<organism>
    <name type="scientific">Ralstonia pickettii (strain 12J)</name>
    <dbReference type="NCBI Taxonomy" id="402626"/>
    <lineage>
        <taxon>Bacteria</taxon>
        <taxon>Pseudomonadati</taxon>
        <taxon>Pseudomonadota</taxon>
        <taxon>Betaproteobacteria</taxon>
        <taxon>Burkholderiales</taxon>
        <taxon>Burkholderiaceae</taxon>
        <taxon>Ralstonia</taxon>
    </lineage>
</organism>
<dbReference type="EC" id="1.17.7.3" evidence="1"/>
<dbReference type="EMBL" id="CP001068">
    <property type="protein sequence ID" value="ACD26207.1"/>
    <property type="molecule type" value="Genomic_DNA"/>
</dbReference>
<dbReference type="SMR" id="B2U9U9"/>
<dbReference type="STRING" id="402626.Rpic_1059"/>
<dbReference type="KEGG" id="rpi:Rpic_1059"/>
<dbReference type="eggNOG" id="COG0821">
    <property type="taxonomic scope" value="Bacteria"/>
</dbReference>
<dbReference type="HOGENOM" id="CLU_042258_1_0_4"/>
<dbReference type="UniPathway" id="UPA00056">
    <property type="reaction ID" value="UER00096"/>
</dbReference>
<dbReference type="GO" id="GO:0051539">
    <property type="term" value="F:4 iron, 4 sulfur cluster binding"/>
    <property type="evidence" value="ECO:0007669"/>
    <property type="project" value="UniProtKB-UniRule"/>
</dbReference>
<dbReference type="GO" id="GO:0046429">
    <property type="term" value="F:4-hydroxy-3-methylbut-2-en-1-yl diphosphate synthase activity (ferredoxin)"/>
    <property type="evidence" value="ECO:0007669"/>
    <property type="project" value="UniProtKB-UniRule"/>
</dbReference>
<dbReference type="GO" id="GO:0141197">
    <property type="term" value="F:4-hydroxy-3-methylbut-2-enyl-diphosphate synthase activity (flavodoxin)"/>
    <property type="evidence" value="ECO:0007669"/>
    <property type="project" value="UniProtKB-EC"/>
</dbReference>
<dbReference type="GO" id="GO:0005506">
    <property type="term" value="F:iron ion binding"/>
    <property type="evidence" value="ECO:0007669"/>
    <property type="project" value="InterPro"/>
</dbReference>
<dbReference type="GO" id="GO:0019288">
    <property type="term" value="P:isopentenyl diphosphate biosynthetic process, methylerythritol 4-phosphate pathway"/>
    <property type="evidence" value="ECO:0007669"/>
    <property type="project" value="UniProtKB-UniRule"/>
</dbReference>
<dbReference type="GO" id="GO:0016114">
    <property type="term" value="P:terpenoid biosynthetic process"/>
    <property type="evidence" value="ECO:0007669"/>
    <property type="project" value="InterPro"/>
</dbReference>
<dbReference type="FunFam" id="3.30.413.10:FF:000012">
    <property type="entry name" value="4-hydroxy-3-methylbut-2-en-1-yl diphosphate synthase (flavodoxin)"/>
    <property type="match status" value="1"/>
</dbReference>
<dbReference type="Gene3D" id="3.20.20.20">
    <property type="entry name" value="Dihydropteroate synthase-like"/>
    <property type="match status" value="1"/>
</dbReference>
<dbReference type="Gene3D" id="3.30.413.10">
    <property type="entry name" value="Sulfite Reductase Hemoprotein, domain 1"/>
    <property type="match status" value="1"/>
</dbReference>
<dbReference type="HAMAP" id="MF_00159">
    <property type="entry name" value="IspG"/>
    <property type="match status" value="1"/>
</dbReference>
<dbReference type="InterPro" id="IPR011005">
    <property type="entry name" value="Dihydropteroate_synth-like_sf"/>
</dbReference>
<dbReference type="InterPro" id="IPR016425">
    <property type="entry name" value="IspG_bac"/>
</dbReference>
<dbReference type="InterPro" id="IPR004588">
    <property type="entry name" value="IspG_bac-typ"/>
</dbReference>
<dbReference type="InterPro" id="IPR045854">
    <property type="entry name" value="NO2/SO3_Rdtase_4Fe4S_sf"/>
</dbReference>
<dbReference type="NCBIfam" id="TIGR00612">
    <property type="entry name" value="ispG_gcpE"/>
    <property type="match status" value="1"/>
</dbReference>
<dbReference type="NCBIfam" id="NF001540">
    <property type="entry name" value="PRK00366.1"/>
    <property type="match status" value="1"/>
</dbReference>
<dbReference type="PANTHER" id="PTHR30454">
    <property type="entry name" value="4-HYDROXY-3-METHYLBUT-2-EN-1-YL DIPHOSPHATE SYNTHASE"/>
    <property type="match status" value="1"/>
</dbReference>
<dbReference type="PANTHER" id="PTHR30454:SF0">
    <property type="entry name" value="4-HYDROXY-3-METHYLBUT-2-EN-1-YL DIPHOSPHATE SYNTHASE (FERREDOXIN), CHLOROPLASTIC"/>
    <property type="match status" value="1"/>
</dbReference>
<dbReference type="Pfam" id="PF04551">
    <property type="entry name" value="GcpE"/>
    <property type="match status" value="1"/>
</dbReference>
<dbReference type="PIRSF" id="PIRSF004640">
    <property type="entry name" value="IspG"/>
    <property type="match status" value="1"/>
</dbReference>
<proteinExistence type="inferred from homology"/>
<evidence type="ECO:0000255" key="1">
    <source>
        <dbReference type="HAMAP-Rule" id="MF_00159"/>
    </source>
</evidence>
<gene>
    <name evidence="1" type="primary">ispG</name>
    <name type="ordered locus">Rpic_1059</name>
</gene>
<accession>B2U9U9</accession>
<name>ISPG_RALPJ</name>
<keyword id="KW-0004">4Fe-4S</keyword>
<keyword id="KW-0408">Iron</keyword>
<keyword id="KW-0411">Iron-sulfur</keyword>
<keyword id="KW-0414">Isoprene biosynthesis</keyword>
<keyword id="KW-0479">Metal-binding</keyword>
<keyword id="KW-0560">Oxidoreductase</keyword>
<comment type="function">
    <text evidence="1">Converts 2C-methyl-D-erythritol 2,4-cyclodiphosphate (ME-2,4cPP) into 1-hydroxy-2-methyl-2-(E)-butenyl 4-diphosphate.</text>
</comment>
<comment type="catalytic activity">
    <reaction evidence="1">
        <text>(2E)-4-hydroxy-3-methylbut-2-enyl diphosphate + oxidized [flavodoxin] + H2O + 2 H(+) = 2-C-methyl-D-erythritol 2,4-cyclic diphosphate + reduced [flavodoxin]</text>
        <dbReference type="Rhea" id="RHEA:43604"/>
        <dbReference type="Rhea" id="RHEA-COMP:10622"/>
        <dbReference type="Rhea" id="RHEA-COMP:10623"/>
        <dbReference type="ChEBI" id="CHEBI:15377"/>
        <dbReference type="ChEBI" id="CHEBI:15378"/>
        <dbReference type="ChEBI" id="CHEBI:57618"/>
        <dbReference type="ChEBI" id="CHEBI:58210"/>
        <dbReference type="ChEBI" id="CHEBI:58483"/>
        <dbReference type="ChEBI" id="CHEBI:128753"/>
        <dbReference type="EC" id="1.17.7.3"/>
    </reaction>
</comment>
<comment type="cofactor">
    <cofactor evidence="1">
        <name>[4Fe-4S] cluster</name>
        <dbReference type="ChEBI" id="CHEBI:49883"/>
    </cofactor>
    <text evidence="1">Binds 1 [4Fe-4S] cluster.</text>
</comment>
<comment type="pathway">
    <text evidence="1">Isoprenoid biosynthesis; isopentenyl diphosphate biosynthesis via DXP pathway; isopentenyl diphosphate from 1-deoxy-D-xylulose 5-phosphate: step 5/6.</text>
</comment>
<comment type="similarity">
    <text evidence="1">Belongs to the IspG family.</text>
</comment>
<feature type="chain" id="PRO_1000097174" description="4-hydroxy-3-methylbut-2-en-1-yl diphosphate synthase (flavodoxin)">
    <location>
        <begin position="1"/>
        <end position="428"/>
    </location>
</feature>
<feature type="binding site" evidence="1">
    <location>
        <position position="315"/>
    </location>
    <ligand>
        <name>[4Fe-4S] cluster</name>
        <dbReference type="ChEBI" id="CHEBI:49883"/>
    </ligand>
</feature>
<feature type="binding site" evidence="1">
    <location>
        <position position="318"/>
    </location>
    <ligand>
        <name>[4Fe-4S] cluster</name>
        <dbReference type="ChEBI" id="CHEBI:49883"/>
    </ligand>
</feature>
<feature type="binding site" evidence="1">
    <location>
        <position position="361"/>
    </location>
    <ligand>
        <name>[4Fe-4S] cluster</name>
        <dbReference type="ChEBI" id="CHEBI:49883"/>
    </ligand>
</feature>
<feature type="binding site" evidence="1">
    <location>
        <position position="368"/>
    </location>
    <ligand>
        <name>[4Fe-4S] cluster</name>
        <dbReference type="ChEBI" id="CHEBI:49883"/>
    </ligand>
</feature>
<reference key="1">
    <citation type="submission" date="2008-05" db="EMBL/GenBank/DDBJ databases">
        <title>Complete sequence of chromosome 1 of Ralstonia pickettii 12J.</title>
        <authorList>
            <person name="Lucas S."/>
            <person name="Copeland A."/>
            <person name="Lapidus A."/>
            <person name="Glavina del Rio T."/>
            <person name="Dalin E."/>
            <person name="Tice H."/>
            <person name="Bruce D."/>
            <person name="Goodwin L."/>
            <person name="Pitluck S."/>
            <person name="Meincke L."/>
            <person name="Brettin T."/>
            <person name="Detter J.C."/>
            <person name="Han C."/>
            <person name="Kuske C.R."/>
            <person name="Schmutz J."/>
            <person name="Larimer F."/>
            <person name="Land M."/>
            <person name="Hauser L."/>
            <person name="Kyrpides N."/>
            <person name="Mikhailova N."/>
            <person name="Marsh T."/>
            <person name="Richardson P."/>
        </authorList>
    </citation>
    <scope>NUCLEOTIDE SEQUENCE [LARGE SCALE GENOMIC DNA]</scope>
    <source>
        <strain>12J</strain>
    </source>
</reference>
<sequence length="428" mass="46117">MEISTPLDCAPALVGPLPRRNSRAAQIRWGDRVVHVGGDAPVCVQSMTNTDTSDAIGTAIQVKELARAGSELVRITVDTPAAAAAVPAIREQLDRMGVDVPLVGDFHYNGHKLLQDYPECAQALSKYRINPGNVGQGAKRDTQFAQMIEIACRYDKPVRIGVNWGSLDQDLLARIMDENAQRATPWDARAVMVEALITSAIQSAQKAEELGLPGSQIILSCKVSAVQDLIAVYRELARRCHYALHLGLTEAGMGSKGIVASTAALSVLLQEGIGDTIRISLTPEPGAPREKEVIVAQEILQTMGLRNFTPMVIACPGCGRTTSTVFQELAARIQSYLREQMPVWKEQYPGVEEMNVAVMGCIVNGPGESKHANIGISLPGTGESPAAPVFVDGVKVKTLRGERITEEFQAIVDEYVRTHYGAQTPATV</sequence>
<protein>
    <recommendedName>
        <fullName evidence="1">4-hydroxy-3-methylbut-2-en-1-yl diphosphate synthase (flavodoxin)</fullName>
        <ecNumber evidence="1">1.17.7.3</ecNumber>
    </recommendedName>
    <alternativeName>
        <fullName evidence="1">1-hydroxy-2-methyl-2-(E)-butenyl 4-diphosphate synthase</fullName>
    </alternativeName>
</protein>